<name>MASTI_POLPI</name>
<keyword id="KW-0027">Amidation</keyword>
<keyword id="KW-0044">Antibiotic</keyword>
<keyword id="KW-0929">Antimicrobial</keyword>
<keyword id="KW-0145">Chemotaxis</keyword>
<keyword id="KW-0903">Direct protein sequencing</keyword>
<keyword id="KW-0391">Immunity</keyword>
<keyword id="KW-0399">Innate immunity</keyword>
<keyword id="KW-0472">Membrane</keyword>
<keyword id="KW-0964">Secreted</keyword>
<keyword id="KW-1052">Target cell membrane</keyword>
<keyword id="KW-1053">Target membrane</keyword>
<sequence>IDWKKLLDAAKQIL</sequence>
<protein>
    <recommendedName>
        <fullName evidence="12">Polybia-mastoparan-I</fullName>
        <shortName evidence="12">Polybia-MP-I</shortName>
        <shortName evidence="7 8 9 10">Polybia-MPI</shortName>
    </recommendedName>
    <alternativeName>
        <fullName>Mastoparan I</fullName>
    </alternativeName>
    <alternativeName>
        <fullName>Mastoparan-1</fullName>
        <shortName>MP-1</shortName>
        <shortName evidence="11">MP1</shortName>
    </alternativeName>
</protein>
<evidence type="ECO:0000269" key="1">
    <source>
    </source>
</evidence>
<evidence type="ECO:0000269" key="2">
    <source>
    </source>
</evidence>
<evidence type="ECO:0000269" key="3">
    <source>
    </source>
</evidence>
<evidence type="ECO:0000269" key="4">
    <source>
    </source>
</evidence>
<evidence type="ECO:0000269" key="5">
    <source>
    </source>
</evidence>
<evidence type="ECO:0000269" key="6">
    <source>
    </source>
</evidence>
<evidence type="ECO:0000303" key="7">
    <source>
    </source>
</evidence>
<evidence type="ECO:0000303" key="8">
    <source>
    </source>
</evidence>
<evidence type="ECO:0000303" key="9">
    <source>
    </source>
</evidence>
<evidence type="ECO:0000303" key="10">
    <source>
    </source>
</evidence>
<evidence type="ECO:0000303" key="11">
    <source>
    </source>
</evidence>
<evidence type="ECO:0000305" key="12"/>
<evidence type="ECO:0000305" key="13">
    <source>
    </source>
</evidence>
<evidence type="ECO:0000305" key="14">
    <source>
    </source>
</evidence>
<evidence type="ECO:0000305" key="15">
    <source>
    </source>
</evidence>
<evidence type="ECO:0000305" key="16">
    <source>
    </source>
</evidence>
<proteinExistence type="evidence at protein level"/>
<comment type="function">
    <text evidence="1 2 3 4 5 6 15">Antimicrobial and chemotactic peptide for polymorphonucleated leukocytes (PMNL) (PubMed:16129513). Potent antimicrobial peptide against Gram-positive bacteria B.subtilis CCT 2576 (MIC=4 ug/ml), and S.aureus ATCC 6538 (MIC=15 ug/ml) and Gram-negative bacteria E.coli ATCC 25922 (MIC=8 ug/ml) and P.aeruginosa ATCC 15422 (MIC=8 ug/ml) (PubMed:16129513). Has low cytotoxicity to normal (non-cancer) cells (Probable) (PubMed:18328599, PubMed:22630563). Exhibits preferential interaction with anionic lipid vesicles over zwitterionic ones, which is further impaired by the presence of cholesterol (PubMed:18328599, PubMed:22630563). In vivo, blood biochemical parameters after mice injection suggest that the peptide induces acute renal failure, hemolysis, rhabdomyolysis, and hepatic necrosis (PubMed:20600424). The death of mice is probably due to acute renal failure resulting from rhabdomyolysis and intravascular hemolysis (PubMed:20600424). Importantly, the peptide is more toxic to cancer cell lines (Jurkat, K-562) than to primary non-cancer cells (human primary lymphocytes) (Probable) (PubMed:22630563). Its toxicity is related to the induction of necrosis (PubMed:19233550, PubMed:22630563). Shows a pore-like activity on Jurkat cells with several bilayer compositions: the highest average conductance is found in bilayers formed by phosphatidylcholine or a mixture of phosphatidylcholine and phosphatidylserine (70:30) (PubMed:22630563). Shows a membranolytic activity on human glioblastoma multiforme cells (brain tumor cells) that leads to cell necrosis (PubMed:28965321). Selectively inhibits the proliferation of prostate and bladder cancer cell lines, as well as the associated endothelial cells (PubMed:18328599). Is effective against multidrug resistant leukemic cells (PubMed:19233550). In vivo, shows anticancer activity when tested on sarcoma xenograft tumors (PubMed:20600424).</text>
</comment>
<comment type="subcellular location">
    <subcellularLocation>
        <location evidence="1">Secreted</location>
    </subcellularLocation>
    <subcellularLocation>
        <location evidence="2 6">Target cell membrane</location>
    </subcellularLocation>
    <text evidence="14 16">Has an amphipathic alpha-helical conformation in a lipid environment (Probable). May disrupt lipid membranes by forming pore-like structure (Probable).</text>
</comment>
<comment type="tissue specificity">
    <text evidence="13">Expressed by the venom gland.</text>
</comment>
<comment type="mass spectrometry"/>
<comment type="miscellaneous">
    <text evidence="1 4">Negative results: causes no or weak hemolysis to rat and mice erythrocytes and has no mast cell degranulation activity at physiological concentrations.</text>
</comment>
<comment type="miscellaneous">
    <text evidence="4">The analog MPI-1, which has a C-terminal thioamide (CS-NH2) instead of the C-terminal amide (CO-NH2), suppress the growth of sarcoma xenograft tumors (S180) with a higher potency than the wild-type peptide. Also has a higher hemolytic activity, a remarkable improved stability to enzymatic degradation, a higher hydrophobicity, and a higher ability to bind protein. Surprisingly, this analog has a lower ability to kill mice than the wild-type peptide when intraperitoneally injected.</text>
</comment>
<comment type="similarity">
    <text evidence="12">Belongs to the MCD family. Mastoparan subfamily.</text>
</comment>
<dbReference type="TCDB" id="1.C.118.1.1">
    <property type="family name" value="the mastoparin peptide 1 (mpp1) family"/>
</dbReference>
<dbReference type="GO" id="GO:0005576">
    <property type="term" value="C:extracellular region"/>
    <property type="evidence" value="ECO:0000314"/>
    <property type="project" value="UniProtKB"/>
</dbReference>
<dbReference type="GO" id="GO:0016020">
    <property type="term" value="C:membrane"/>
    <property type="evidence" value="ECO:0007669"/>
    <property type="project" value="UniProtKB-KW"/>
</dbReference>
<dbReference type="GO" id="GO:0044218">
    <property type="term" value="C:other organism cell membrane"/>
    <property type="evidence" value="ECO:0007669"/>
    <property type="project" value="UniProtKB-KW"/>
</dbReference>
<dbReference type="GO" id="GO:0006935">
    <property type="term" value="P:chemotaxis"/>
    <property type="evidence" value="ECO:0007669"/>
    <property type="project" value="UniProtKB-KW"/>
</dbReference>
<dbReference type="GO" id="GO:0050829">
    <property type="term" value="P:defense response to Gram-negative bacterium"/>
    <property type="evidence" value="ECO:0000314"/>
    <property type="project" value="UniProtKB"/>
</dbReference>
<dbReference type="GO" id="GO:0050830">
    <property type="term" value="P:defense response to Gram-positive bacterium"/>
    <property type="evidence" value="ECO:0000314"/>
    <property type="project" value="UniProtKB"/>
</dbReference>
<dbReference type="GO" id="GO:0045087">
    <property type="term" value="P:innate immune response"/>
    <property type="evidence" value="ECO:0007669"/>
    <property type="project" value="UniProtKB-KW"/>
</dbReference>
<dbReference type="GO" id="GO:0050921">
    <property type="term" value="P:positive regulation of chemotaxis"/>
    <property type="evidence" value="ECO:0000314"/>
    <property type="project" value="UniProtKB"/>
</dbReference>
<reference key="1">
    <citation type="journal article" date="2005" name="Peptides">
        <title>Structural and functional characterization of two novel peptide toxins isolated from the venom of the social wasp Polybia paulista.</title>
        <authorList>
            <person name="Souza B.M."/>
            <person name="Mendes M.A."/>
            <person name="Santos L.D."/>
            <person name="Marques M.R."/>
            <person name="Cesar L.M.M."/>
            <person name="Almeida R.N.A."/>
            <person name="Pagnocca F.C."/>
            <person name="Konno K."/>
            <person name="Palma M.S."/>
        </authorList>
    </citation>
    <scope>PROTEIN SEQUENCE</scope>
    <scope>FUNCTION</scope>
    <scope>MASS SPECTROMETRY</scope>
    <scope>AMIDATION AT LEU-14</scope>
    <scope>SUBCELLULAR LOCATION</scope>
    <source>
        <tissue>Venom</tissue>
    </source>
</reference>
<reference key="2">
    <citation type="journal article" date="2008" name="Peptides">
        <title>Antitumor effects, cell selectivity and structure-activity relationship of a novel antimicrobial peptide polybia-MPI.</title>
        <authorList>
            <person name="Wang K.R."/>
            <person name="Zhang B.Z."/>
            <person name="Zhang W."/>
            <person name="Yan J.X."/>
            <person name="Li J."/>
            <person name="Wang R."/>
        </authorList>
    </citation>
    <scope>FUNCTION</scope>
    <scope>FUNCTION ON TUMOR CELL LINES</scope>
    <scope>SYNTHESIS</scope>
    <scope>MUTAGENESIS OF LEU-7; ASP-8 AND ALA-9</scope>
    <scope>SUBCELLULAR LOCATION</scope>
</reference>
<reference key="3">
    <citation type="journal article" date="2009" name="Cancer Lett.">
        <title>Novel mode of action of polybia-MPI, a novel antimicrobial peptide, in multi-drug resistant leukemic cells.</title>
        <authorList>
            <person name="Wang K.R."/>
            <person name="Yan J.X."/>
            <person name="Zhang B.Z."/>
            <person name="Song J.J."/>
            <person name="Jia P.F."/>
            <person name="Wang R."/>
        </authorList>
    </citation>
    <scope>FUNCTION ON TUMOR CELL LINES</scope>
</reference>
<reference key="4">
    <citation type="journal article" date="2010" name="Peptides">
        <title>A novel analog of antimicrobial peptide Polybia-MPI, with thioamide bond substitution, exhibits increased therapeutic efficacy against cancer and diminished toxicity in mice.</title>
        <authorList>
            <person name="Zhang W."/>
            <person name="Li J."/>
            <person name="Liu L.W."/>
            <person name="Wang K.R."/>
            <person name="Song J.J."/>
            <person name="Yan J.X."/>
            <person name="Li Z.Y."/>
            <person name="Zhang B.Z."/>
            <person name="Wang R."/>
        </authorList>
    </citation>
    <scope>FUNCTION</scope>
    <scope>SYNTHESIS OF WILD-TYPE PEPTIDE AND ANALOG</scope>
    <scope>BIOASSAY</scope>
</reference>
<reference key="5">
    <citation type="journal article" date="2012" name="Biochemistry">
        <title>Influence of the bilayer composition on the binding and membrane disrupting effect of Polybia-MP1, an antimicrobial mastoparan peptide with leukemic T-lymphocyte cell selectivity.</title>
        <authorList>
            <person name="dos Santos Cabrera M.P."/>
            <person name="Arcisio-Miranda M."/>
            <person name="Gorjao R."/>
            <person name="Leite N.B."/>
            <person name="de Souza B.M."/>
            <person name="Curi R."/>
            <person name="Procopio J."/>
            <person name="Ruggiero Neto J."/>
            <person name="Palma M.S."/>
        </authorList>
    </citation>
    <scope>FUNCTION</scope>
    <scope>SYNTHESIS</scope>
    <scope>MEMBRANE-BINDING</scope>
</reference>
<reference key="6">
    <citation type="journal article" date="2018" name="Mol. Neurobiol.">
        <title>Pro-necrotic activity of cationic mastoparan peptides in human glioblastoma multiforme cells via membranolytic action.</title>
        <authorList>
            <person name="da Silva A.M.B."/>
            <person name="Silva-Goncalves L.C."/>
            <person name="Oliveira F.A."/>
            <person name="Arcisio-Miranda M."/>
        </authorList>
    </citation>
    <scope>FUNCTION</scope>
    <scope>SUBCELLULAR LOCATION</scope>
</reference>
<feature type="peptide" id="PRO_0000247263" description="Polybia-mastoparan-I" evidence="1">
    <location>
        <begin position="1"/>
        <end position="14"/>
    </location>
</feature>
<feature type="modified residue" description="Leucine amide" evidence="1">
    <location>
        <position position="14"/>
    </location>
</feature>
<feature type="mutagenesis site" description="Decrease in both antitumor activity and content of alpha-helix conformation." evidence="2">
    <original>L</original>
    <variation>P</variation>
    <location>
        <position position="7"/>
    </location>
</feature>
<feature type="mutagenesis site" description="Decrease in both antitumor activity and content of alpha-helix conformation." evidence="2">
    <original>D</original>
    <variation>P</variation>
    <location>
        <position position="8"/>
    </location>
</feature>
<feature type="mutagenesis site" description="Decrease in both antitumor activity and content of alpha-helix conformation." evidence="2">
    <original>A</original>
    <variation>P</variation>
    <location>
        <position position="9"/>
    </location>
</feature>
<accession>P0C1Q4</accession>
<accession>P84878</accession>
<organism>
    <name type="scientific">Polybia paulista</name>
    <name type="common">Neotropical social wasp</name>
    <name type="synonym">Swarm-founding polistine wasp</name>
    <dbReference type="NCBI Taxonomy" id="291283"/>
    <lineage>
        <taxon>Eukaryota</taxon>
        <taxon>Metazoa</taxon>
        <taxon>Ecdysozoa</taxon>
        <taxon>Arthropoda</taxon>
        <taxon>Hexapoda</taxon>
        <taxon>Insecta</taxon>
        <taxon>Pterygota</taxon>
        <taxon>Neoptera</taxon>
        <taxon>Endopterygota</taxon>
        <taxon>Hymenoptera</taxon>
        <taxon>Apocrita</taxon>
        <taxon>Aculeata</taxon>
        <taxon>Vespoidea</taxon>
        <taxon>Vespidae</taxon>
        <taxon>Polistinae</taxon>
        <taxon>Epiponini</taxon>
        <taxon>Polybia</taxon>
    </lineage>
</organism>